<protein>
    <recommendedName>
        <fullName evidence="4">Glutamine synthetase</fullName>
        <shortName evidence="4">GS</shortName>
        <ecNumber evidence="4">6.3.1.2</ecNumber>
    </recommendedName>
    <alternativeName>
        <fullName evidence="4">Glutamate--ammonia ligase</fullName>
    </alternativeName>
    <alternativeName>
        <fullName evidence="4">Glutamine synthetase I beta</fullName>
        <shortName evidence="4">GSI beta</shortName>
    </alternativeName>
</protein>
<accession>P15106</accession>
<gene>
    <name evidence="9 10" type="primary">glnA</name>
    <name type="ordered locus">SCO2198</name>
    <name type="ORF">SC3H12.06</name>
</gene>
<comment type="function">
    <text evidence="4 7">Catalyzes the ATP-dependent biosynthesis of glutamine from glutamate and ammonia (By similarity). Complements L-glutamine auxotrophy of an E.coli glnA mutant (PubMed:16932908).</text>
</comment>
<comment type="catalytic activity">
    <reaction evidence="4">
        <text>L-glutamate + NH4(+) + ATP = L-glutamine + ADP + phosphate + H(+)</text>
        <dbReference type="Rhea" id="RHEA:16169"/>
        <dbReference type="ChEBI" id="CHEBI:15378"/>
        <dbReference type="ChEBI" id="CHEBI:28938"/>
        <dbReference type="ChEBI" id="CHEBI:29985"/>
        <dbReference type="ChEBI" id="CHEBI:30616"/>
        <dbReference type="ChEBI" id="CHEBI:43474"/>
        <dbReference type="ChEBI" id="CHEBI:58359"/>
        <dbReference type="ChEBI" id="CHEBI:456216"/>
        <dbReference type="EC" id="6.3.1.2"/>
    </reaction>
</comment>
<comment type="cofactor">
    <cofactor evidence="4">
        <name>Mg(2+)</name>
        <dbReference type="ChEBI" id="CHEBI:18420"/>
    </cofactor>
    <text evidence="4">Binds 2 Mg(2+) ions per subunit.</text>
</comment>
<comment type="activity regulation">
    <text evidence="4">The activity of this enzyme could be controlled by adenylation under conditions of abundant glutamine.</text>
</comment>
<comment type="subunit">
    <text evidence="4">Oligomer of 12 subunits arranged in the form of two hexagons.</text>
</comment>
<comment type="subcellular location">
    <subcellularLocation>
        <location evidence="4">Cytoplasm</location>
    </subcellularLocation>
</comment>
<comment type="disruption phenotype">
    <text evidence="8">Grows on defined Evans agar supplemented with ammonium chloride as a sole nitrogen source. However, double deletion mutant glnA/glnII is not able to grow on this medium and is auxotrophic for glutamine, indicating that both encode glutamine synthetases.</text>
</comment>
<comment type="similarity">
    <text evidence="4">Belongs to the glutamine synthetase family.</text>
</comment>
<organism>
    <name type="scientific">Streptomyces coelicolor (strain ATCC BAA-471 / A3(2) / M145)</name>
    <dbReference type="NCBI Taxonomy" id="100226"/>
    <lineage>
        <taxon>Bacteria</taxon>
        <taxon>Bacillati</taxon>
        <taxon>Actinomycetota</taxon>
        <taxon>Actinomycetes</taxon>
        <taxon>Kitasatosporales</taxon>
        <taxon>Streptomycetaceae</taxon>
        <taxon>Streptomyces</taxon>
        <taxon>Streptomyces albidoflavus group</taxon>
    </lineage>
</organism>
<sequence>MFQNADDVKKFIADEDVKFVDVRFCDLPGVMQHFTLPATAFDPDAEQAFDGSSIRGFQAIHESDMSLRPDLSTARVDPFRRDKTLNINFFIHDPITGEQYSRDPRNVAKKAEAYLASTGIADTAFFGPEAEFYVFDSVRFATRENESFYHIDSEAGAWNTGALEDNRGYKVRYKGGYFPVPPVDHFADLRAEISLELERSGLQVERQHHEVGTAGQAEINYKFNTLLAAADDLQLFKYIVKNVAWKNGKTATFMPKPIFGDNGSGMHVHQSLWSGGEPLFYDEQGYAGLSDTARYYIGGILKHAPSLLAFTNPTVNSYHRLVPGFEAPVNLVYSQRNRSAAMRIPITGSNPKAKRVEFRAPDASGNPYLAFSALLLAGLDGIKNKIEPAEPIDKDLYELAPEEHANVAQVPTSLGAVLDRLEADHEFLLQGDVFTPDLIETWIDFKRANEIAPLQLRPHPHEFEMYFDV</sequence>
<reference key="1">
    <citation type="journal article" date="1988" name="Gene">
        <title>Cloning and nucleotide sequence of the Streptomyces coelicolor gene encoding glutamine synthetase.</title>
        <authorList>
            <person name="Wray L.V. Jr."/>
            <person name="Fisher S.H."/>
        </authorList>
    </citation>
    <scope>NUCLEOTIDE SEQUENCE [GENOMIC DNA]</scope>
</reference>
<reference key="2">
    <citation type="journal article" date="2002" name="Nature">
        <title>Complete genome sequence of the model actinomycete Streptomyces coelicolor A3(2).</title>
        <authorList>
            <person name="Bentley S.D."/>
            <person name="Chater K.F."/>
            <person name="Cerdeno-Tarraga A.-M."/>
            <person name="Challis G.L."/>
            <person name="Thomson N.R."/>
            <person name="James K.D."/>
            <person name="Harris D.E."/>
            <person name="Quail M.A."/>
            <person name="Kieser H."/>
            <person name="Harper D."/>
            <person name="Bateman A."/>
            <person name="Brown S."/>
            <person name="Chandra G."/>
            <person name="Chen C.W."/>
            <person name="Collins M."/>
            <person name="Cronin A."/>
            <person name="Fraser A."/>
            <person name="Goble A."/>
            <person name="Hidalgo J."/>
            <person name="Hornsby T."/>
            <person name="Howarth S."/>
            <person name="Huang C.-H."/>
            <person name="Kieser T."/>
            <person name="Larke L."/>
            <person name="Murphy L.D."/>
            <person name="Oliver K."/>
            <person name="O'Neil S."/>
            <person name="Rabbinowitsch E."/>
            <person name="Rajandream M.A."/>
            <person name="Rutherford K.M."/>
            <person name="Rutter S."/>
            <person name="Seeger K."/>
            <person name="Saunders D."/>
            <person name="Sharp S."/>
            <person name="Squares R."/>
            <person name="Squares S."/>
            <person name="Taylor K."/>
            <person name="Warren T."/>
            <person name="Wietzorrek A."/>
            <person name="Woodward J.R."/>
            <person name="Barrell B.G."/>
            <person name="Parkhill J."/>
            <person name="Hopwood D.A."/>
        </authorList>
    </citation>
    <scope>NUCLEOTIDE SEQUENCE [LARGE SCALE GENOMIC DNA]</scope>
    <source>
        <strain>ATCC BAA-471 / A3(2) / M145</strain>
    </source>
</reference>
<reference key="3">
    <citation type="journal article" date="2006" name="Arch. Microbiol.">
        <title>Investigation of the functional properties and regulation of three glutamine synthetase-like genes in Streptomyces coelicolor A3(2).</title>
        <authorList>
            <person name="Rexer H.U."/>
            <person name="Schaeberle T."/>
            <person name="Wohlleben W."/>
            <person name="Engels A."/>
        </authorList>
    </citation>
    <scope>FUNCTION</scope>
    <source>
        <strain evidence="9">ATCC BAA-471 / A3(2) / M145</strain>
    </source>
</reference>
<reference key="4">
    <citation type="journal article" date="2017" name="Front. Microbiol.">
        <title>Gamma-Glutamylpolyamine Synthetase GlnA3 Is Involved in the First Step of Polyamine Degradation Pathway in Streptomyces coelicolor M145.</title>
        <authorList>
            <person name="Krysenko S."/>
            <person name="Okoniewski N."/>
            <person name="Kulik A."/>
            <person name="Matthews A."/>
            <person name="Grimpo J."/>
            <person name="Wohlleben W."/>
            <person name="Bera A."/>
        </authorList>
    </citation>
    <scope>DISRUPTION PHENOTYPE</scope>
    <source>
        <strain evidence="10">ATCC BAA-471 / A3(2) / M145</strain>
    </source>
</reference>
<evidence type="ECO:0000250" key="1">
    <source>
        <dbReference type="UniProtKB" id="P0A1P6"/>
    </source>
</evidence>
<evidence type="ECO:0000250" key="2">
    <source>
        <dbReference type="UniProtKB" id="P12425"/>
    </source>
</evidence>
<evidence type="ECO:0000250" key="3">
    <source>
        <dbReference type="UniProtKB" id="P77961"/>
    </source>
</evidence>
<evidence type="ECO:0000250" key="4">
    <source>
        <dbReference type="UniProtKB" id="P9WN39"/>
    </source>
</evidence>
<evidence type="ECO:0000255" key="5">
    <source>
        <dbReference type="PROSITE-ProRule" id="PRU01330"/>
    </source>
</evidence>
<evidence type="ECO:0000255" key="6">
    <source>
        <dbReference type="PROSITE-ProRule" id="PRU01331"/>
    </source>
</evidence>
<evidence type="ECO:0000269" key="7">
    <source>
    </source>
</evidence>
<evidence type="ECO:0000269" key="8">
    <source>
    </source>
</evidence>
<evidence type="ECO:0000303" key="9">
    <source>
    </source>
</evidence>
<evidence type="ECO:0000303" key="10">
    <source>
    </source>
</evidence>
<name>GLN1B_STRCO</name>
<feature type="chain" id="PRO_0000153266" description="Glutamine synthetase">
    <location>
        <begin position="1"/>
        <end position="469"/>
    </location>
</feature>
<feature type="domain" description="GS beta-grasp" evidence="5">
    <location>
        <begin position="15"/>
        <end position="96"/>
    </location>
</feature>
<feature type="domain" description="GS catalytic" evidence="6">
    <location>
        <begin position="104"/>
        <end position="469"/>
    </location>
</feature>
<feature type="binding site" evidence="4">
    <location>
        <position position="129"/>
    </location>
    <ligand>
        <name>Mg(2+)</name>
        <dbReference type="ChEBI" id="CHEBI:18420"/>
        <label>1</label>
    </ligand>
</feature>
<feature type="binding site" evidence="4">
    <location>
        <position position="131"/>
    </location>
    <ligand>
        <name>Mg(2+)</name>
        <dbReference type="ChEBI" id="CHEBI:18420"/>
        <label>2</label>
    </ligand>
</feature>
<feature type="binding site" evidence="4">
    <location>
        <position position="205"/>
    </location>
    <ligand>
        <name>ATP</name>
        <dbReference type="ChEBI" id="CHEBI:30616"/>
    </ligand>
</feature>
<feature type="binding site" evidence="4">
    <location>
        <position position="210"/>
    </location>
    <ligand>
        <name>Mg(2+)</name>
        <dbReference type="ChEBI" id="CHEBI:18420"/>
        <label>2</label>
    </ligand>
</feature>
<feature type="binding site" evidence="4">
    <location>
        <position position="218"/>
    </location>
    <ligand>
        <name>Mg(2+)</name>
        <dbReference type="ChEBI" id="CHEBI:18420"/>
        <label>2</label>
    </ligand>
</feature>
<feature type="binding site" evidence="4">
    <location>
        <begin position="221"/>
        <end position="223"/>
    </location>
    <ligand>
        <name>ATP</name>
        <dbReference type="ChEBI" id="CHEBI:30616"/>
    </ligand>
</feature>
<feature type="binding site" evidence="4">
    <location>
        <begin position="262"/>
        <end position="263"/>
    </location>
    <ligand>
        <name>L-glutamate</name>
        <dbReference type="ChEBI" id="CHEBI:29985"/>
    </ligand>
</feature>
<feature type="binding site" evidence="2">
    <location>
        <position position="263"/>
    </location>
    <ligand>
        <name>L-glutamate</name>
        <dbReference type="ChEBI" id="CHEBI:29985"/>
    </ligand>
</feature>
<feature type="binding site" evidence="4">
    <location>
        <position position="267"/>
    </location>
    <ligand>
        <name>Mg(2+)</name>
        <dbReference type="ChEBI" id="CHEBI:18420"/>
        <label>1</label>
    </ligand>
</feature>
<feature type="binding site" evidence="4">
    <location>
        <begin position="269"/>
        <end position="271"/>
    </location>
    <ligand>
        <name>ATP</name>
        <dbReference type="ChEBI" id="CHEBI:30616"/>
    </ligand>
</feature>
<feature type="binding site" evidence="3">
    <location>
        <position position="271"/>
    </location>
    <ligand>
        <name>ATP</name>
        <dbReference type="ChEBI" id="CHEBI:30616"/>
    </ligand>
</feature>
<feature type="binding site" evidence="4">
    <location>
        <position position="320"/>
    </location>
    <ligand>
        <name>L-glutamate</name>
        <dbReference type="ChEBI" id="CHEBI:29985"/>
    </ligand>
</feature>
<feature type="binding site" evidence="1">
    <location>
        <position position="326"/>
    </location>
    <ligand>
        <name>L-glutamate</name>
        <dbReference type="ChEBI" id="CHEBI:29985"/>
    </ligand>
</feature>
<feature type="binding site" evidence="4">
    <location>
        <position position="338"/>
    </location>
    <ligand>
        <name>ATP</name>
        <dbReference type="ChEBI" id="CHEBI:30616"/>
    </ligand>
</feature>
<feature type="binding site" evidence="4">
    <location>
        <position position="338"/>
    </location>
    <ligand>
        <name>L-glutamate</name>
        <dbReference type="ChEBI" id="CHEBI:29985"/>
    </ligand>
</feature>
<feature type="binding site" evidence="4">
    <location>
        <position position="343"/>
    </location>
    <ligand>
        <name>ATP</name>
        <dbReference type="ChEBI" id="CHEBI:30616"/>
    </ligand>
</feature>
<feature type="binding site" evidence="3">
    <location>
        <position position="352"/>
    </location>
    <ligand>
        <name>ATP</name>
        <dbReference type="ChEBI" id="CHEBI:30616"/>
    </ligand>
</feature>
<feature type="binding site" evidence="4">
    <location>
        <position position="357"/>
    </location>
    <ligand>
        <name>Mg(2+)</name>
        <dbReference type="ChEBI" id="CHEBI:18420"/>
        <label>1</label>
    </ligand>
</feature>
<feature type="binding site" evidence="4">
    <location>
        <position position="359"/>
    </location>
    <ligand>
        <name>L-glutamate</name>
        <dbReference type="ChEBI" id="CHEBI:29985"/>
    </ligand>
</feature>
<feature type="modified residue" description="O-AMP-tyrosine" evidence="4">
    <location>
        <position position="397"/>
    </location>
</feature>
<keyword id="KW-0067">ATP-binding</keyword>
<keyword id="KW-0963">Cytoplasm</keyword>
<keyword id="KW-0436">Ligase</keyword>
<keyword id="KW-0460">Magnesium</keyword>
<keyword id="KW-0479">Metal-binding</keyword>
<keyword id="KW-0547">Nucleotide-binding</keyword>
<keyword id="KW-0597">Phosphoprotein</keyword>
<keyword id="KW-1185">Reference proteome</keyword>
<dbReference type="EC" id="6.3.1.2" evidence="4"/>
<dbReference type="EMBL" id="M23172">
    <property type="protein sequence ID" value="AAA72717.1"/>
    <property type="molecule type" value="Genomic_DNA"/>
</dbReference>
<dbReference type="EMBL" id="AL939111">
    <property type="protein sequence ID" value="CAB90845.1"/>
    <property type="molecule type" value="Genomic_DNA"/>
</dbReference>
<dbReference type="PIR" id="JT0389">
    <property type="entry name" value="AJSMQC"/>
</dbReference>
<dbReference type="RefSeq" id="NP_626450.1">
    <property type="nucleotide sequence ID" value="NC_003888.3"/>
</dbReference>
<dbReference type="RefSeq" id="WP_003976617.1">
    <property type="nucleotide sequence ID" value="NZ_VNID01000001.1"/>
</dbReference>
<dbReference type="SMR" id="P15106"/>
<dbReference type="FunCoup" id="P15106">
    <property type="interactions" value="322"/>
</dbReference>
<dbReference type="STRING" id="100226.gene:17759795"/>
<dbReference type="PaxDb" id="100226-SCO2198"/>
<dbReference type="DNASU" id="1097631"/>
<dbReference type="GeneID" id="96650961"/>
<dbReference type="KEGG" id="sco:SCO2198"/>
<dbReference type="PATRIC" id="fig|100226.15.peg.2235"/>
<dbReference type="eggNOG" id="COG0174">
    <property type="taxonomic scope" value="Bacteria"/>
</dbReference>
<dbReference type="HOGENOM" id="CLU_017290_1_2_11"/>
<dbReference type="InParanoid" id="P15106"/>
<dbReference type="OrthoDB" id="9807095at2"/>
<dbReference type="PhylomeDB" id="P15106"/>
<dbReference type="BRENDA" id="6.3.1.2">
    <property type="organism ID" value="5998"/>
</dbReference>
<dbReference type="Proteomes" id="UP000001973">
    <property type="component" value="Chromosome"/>
</dbReference>
<dbReference type="GO" id="GO:0005737">
    <property type="term" value="C:cytoplasm"/>
    <property type="evidence" value="ECO:0000250"/>
    <property type="project" value="UniProtKB"/>
</dbReference>
<dbReference type="GO" id="GO:0016020">
    <property type="term" value="C:membrane"/>
    <property type="evidence" value="ECO:0000318"/>
    <property type="project" value="GO_Central"/>
</dbReference>
<dbReference type="GO" id="GO:0005524">
    <property type="term" value="F:ATP binding"/>
    <property type="evidence" value="ECO:0000250"/>
    <property type="project" value="UniProtKB"/>
</dbReference>
<dbReference type="GO" id="GO:0004356">
    <property type="term" value="F:glutamine synthetase activity"/>
    <property type="evidence" value="ECO:0000315"/>
    <property type="project" value="CACAO"/>
</dbReference>
<dbReference type="GO" id="GO:0046872">
    <property type="term" value="F:metal ion binding"/>
    <property type="evidence" value="ECO:0007669"/>
    <property type="project" value="UniProtKB-KW"/>
</dbReference>
<dbReference type="GO" id="GO:0006542">
    <property type="term" value="P:glutamine biosynthetic process"/>
    <property type="evidence" value="ECO:0000250"/>
    <property type="project" value="UniProtKB"/>
</dbReference>
<dbReference type="GO" id="GO:0019740">
    <property type="term" value="P:nitrogen utilization"/>
    <property type="evidence" value="ECO:0000250"/>
    <property type="project" value="UniProtKB"/>
</dbReference>
<dbReference type="FunFam" id="3.10.20.70:FF:000006">
    <property type="entry name" value="Glutamine synthetase"/>
    <property type="match status" value="1"/>
</dbReference>
<dbReference type="FunFam" id="3.30.590.10:FF:000001">
    <property type="entry name" value="Glutamine synthetase"/>
    <property type="match status" value="1"/>
</dbReference>
<dbReference type="Gene3D" id="3.10.20.70">
    <property type="entry name" value="Glutamine synthetase, N-terminal domain"/>
    <property type="match status" value="1"/>
</dbReference>
<dbReference type="Gene3D" id="3.30.590.10">
    <property type="entry name" value="Glutamine synthetase/guanido kinase, catalytic domain"/>
    <property type="match status" value="1"/>
</dbReference>
<dbReference type="InterPro" id="IPR008147">
    <property type="entry name" value="Gln_synt_N"/>
</dbReference>
<dbReference type="InterPro" id="IPR036651">
    <property type="entry name" value="Gln_synt_N_sf"/>
</dbReference>
<dbReference type="InterPro" id="IPR014746">
    <property type="entry name" value="Gln_synth/guanido_kin_cat_dom"/>
</dbReference>
<dbReference type="InterPro" id="IPR008146">
    <property type="entry name" value="Gln_synth_cat_dom"/>
</dbReference>
<dbReference type="InterPro" id="IPR027303">
    <property type="entry name" value="Gln_synth_gly_rich_site"/>
</dbReference>
<dbReference type="InterPro" id="IPR004809">
    <property type="entry name" value="Gln_synth_I"/>
</dbReference>
<dbReference type="InterPro" id="IPR001637">
    <property type="entry name" value="Gln_synth_I_adenylation_site"/>
</dbReference>
<dbReference type="InterPro" id="IPR027302">
    <property type="entry name" value="Gln_synth_N_conserv_site"/>
</dbReference>
<dbReference type="NCBIfam" id="TIGR00653">
    <property type="entry name" value="GlnA"/>
    <property type="match status" value="1"/>
</dbReference>
<dbReference type="PANTHER" id="PTHR43407">
    <property type="entry name" value="GLUTAMINE SYNTHETASE"/>
    <property type="match status" value="1"/>
</dbReference>
<dbReference type="PANTHER" id="PTHR43407:SF1">
    <property type="entry name" value="LENGSIN"/>
    <property type="match status" value="1"/>
</dbReference>
<dbReference type="Pfam" id="PF00120">
    <property type="entry name" value="Gln-synt_C"/>
    <property type="match status" value="1"/>
</dbReference>
<dbReference type="Pfam" id="PF03951">
    <property type="entry name" value="Gln-synt_N"/>
    <property type="match status" value="1"/>
</dbReference>
<dbReference type="SMART" id="SM01230">
    <property type="entry name" value="Gln-synt_C"/>
    <property type="match status" value="1"/>
</dbReference>
<dbReference type="SUPFAM" id="SSF54368">
    <property type="entry name" value="Glutamine synthetase, N-terminal domain"/>
    <property type="match status" value="1"/>
</dbReference>
<dbReference type="SUPFAM" id="SSF55931">
    <property type="entry name" value="Glutamine synthetase/guanido kinase"/>
    <property type="match status" value="1"/>
</dbReference>
<dbReference type="PROSITE" id="PS00180">
    <property type="entry name" value="GLNA_1"/>
    <property type="match status" value="1"/>
</dbReference>
<dbReference type="PROSITE" id="PS00182">
    <property type="entry name" value="GLNA_ADENYLATION"/>
    <property type="match status" value="1"/>
</dbReference>
<dbReference type="PROSITE" id="PS00181">
    <property type="entry name" value="GLNA_ATP"/>
    <property type="match status" value="1"/>
</dbReference>
<dbReference type="PROSITE" id="PS51986">
    <property type="entry name" value="GS_BETA_GRASP"/>
    <property type="match status" value="1"/>
</dbReference>
<dbReference type="PROSITE" id="PS51987">
    <property type="entry name" value="GS_CATALYTIC"/>
    <property type="match status" value="1"/>
</dbReference>
<proteinExistence type="inferred from homology"/>